<sequence length="231" mass="25466">PIAGSMVLAAILLKLGGYGIIRMMQVLPPTKTDMFLPFIVLALWGAILANLTCLQQTDLKSLIAYSSISHMGLVVAAIIIQTPWGLSGAMALMIAHGFTSSALFCLANTTYERTHTRILILTRGFHNILPMTTTWWLLTNLMNIATPPSLNFTSELLIMSSLFNWCPTTIILLGLSMLITASYSLHMFLSTQTGPTLLDNQTEPTHSREHLLMALHIIPLMMISMKPELII</sequence>
<protein>
    <recommendedName>
        <fullName>NADH-ubiquinone oxidoreductase chain 4</fullName>
        <ecNumber>7.1.1.2</ecNumber>
    </recommendedName>
    <alternativeName>
        <fullName>NADH dehydrogenase subunit 4</fullName>
    </alternativeName>
</protein>
<comment type="function">
    <text evidence="1">Core subunit of the mitochondrial membrane respiratory chain NADH dehydrogenase (Complex I) that is believed to belong to the minimal assembly required for catalysis. Complex I functions in the transfer of electrons from NADH to the respiratory chain. The immediate electron acceptor for the enzyme is believed to be ubiquinone (By similarity).</text>
</comment>
<comment type="catalytic activity">
    <reaction>
        <text>a ubiquinone + NADH + 5 H(+)(in) = a ubiquinol + NAD(+) + 4 H(+)(out)</text>
        <dbReference type="Rhea" id="RHEA:29091"/>
        <dbReference type="Rhea" id="RHEA-COMP:9565"/>
        <dbReference type="Rhea" id="RHEA-COMP:9566"/>
        <dbReference type="ChEBI" id="CHEBI:15378"/>
        <dbReference type="ChEBI" id="CHEBI:16389"/>
        <dbReference type="ChEBI" id="CHEBI:17976"/>
        <dbReference type="ChEBI" id="CHEBI:57540"/>
        <dbReference type="ChEBI" id="CHEBI:57945"/>
        <dbReference type="EC" id="7.1.1.2"/>
    </reaction>
</comment>
<comment type="subcellular location">
    <subcellularLocation>
        <location evidence="1">Mitochondrion membrane</location>
        <topology evidence="1">Multi-pass membrane protein</topology>
    </subcellularLocation>
</comment>
<comment type="similarity">
    <text evidence="3">Belongs to the complex I subunit 4 family.</text>
</comment>
<reference key="1">
    <citation type="journal article" date="1996" name="Copeia">
        <title>Crotaline intergeneric relationships based on mitochondrial DNA sequence data.</title>
        <authorList>
            <person name="Kraus F."/>
            <person name="Mink D.G."/>
            <person name="Brown W.M."/>
        </authorList>
    </citation>
    <scope>NUCLEOTIDE SEQUENCE [GENOMIC DNA]</scope>
</reference>
<gene>
    <name type="primary">MT-ND4</name>
    <name type="synonym">MTND4</name>
    <name type="synonym">NADH4</name>
    <name type="synonym">ND4</name>
</gene>
<feature type="chain" id="PRO_0000117998" description="NADH-ubiquinone oxidoreductase chain 4">
    <location>
        <begin position="1" status="less than"/>
        <end position="231" status="greater than"/>
    </location>
</feature>
<feature type="transmembrane region" description="Helical" evidence="2">
    <location>
        <begin position="1"/>
        <end position="21"/>
    </location>
</feature>
<feature type="transmembrane region" description="Helical" evidence="2">
    <location>
        <begin position="34"/>
        <end position="54"/>
    </location>
</feature>
<feature type="transmembrane region" description="Helical" evidence="2">
    <location>
        <begin position="61"/>
        <end position="80"/>
    </location>
</feature>
<feature type="transmembrane region" description="Helical" evidence="2">
    <location>
        <begin position="84"/>
        <end position="106"/>
    </location>
</feature>
<feature type="transmembrane region" description="Helical" evidence="2">
    <location>
        <begin position="118"/>
        <end position="138"/>
    </location>
</feature>
<feature type="transmembrane region" description="Helical" evidence="2">
    <location>
        <begin position="156"/>
        <end position="178"/>
    </location>
</feature>
<feature type="non-terminal residue">
    <location>
        <position position="1"/>
    </location>
</feature>
<feature type="non-terminal residue">
    <location>
        <position position="231"/>
    </location>
</feature>
<name>NU4M_PROFL</name>
<organism>
    <name type="scientific">Protobothrops flavoviridis</name>
    <name type="common">Habu</name>
    <name type="synonym">Trimeresurus flavoviridis</name>
    <dbReference type="NCBI Taxonomy" id="88087"/>
    <lineage>
        <taxon>Eukaryota</taxon>
        <taxon>Metazoa</taxon>
        <taxon>Chordata</taxon>
        <taxon>Craniata</taxon>
        <taxon>Vertebrata</taxon>
        <taxon>Euteleostomi</taxon>
        <taxon>Lepidosauria</taxon>
        <taxon>Squamata</taxon>
        <taxon>Bifurcata</taxon>
        <taxon>Unidentata</taxon>
        <taxon>Episquamata</taxon>
        <taxon>Toxicofera</taxon>
        <taxon>Serpentes</taxon>
        <taxon>Colubroidea</taxon>
        <taxon>Viperidae</taxon>
        <taxon>Crotalinae</taxon>
        <taxon>Protobothrops</taxon>
    </lineage>
</organism>
<keyword id="KW-0249">Electron transport</keyword>
<keyword id="KW-0472">Membrane</keyword>
<keyword id="KW-0496">Mitochondrion</keyword>
<keyword id="KW-0520">NAD</keyword>
<keyword id="KW-0679">Respiratory chain</keyword>
<keyword id="KW-1278">Translocase</keyword>
<keyword id="KW-0812">Transmembrane</keyword>
<keyword id="KW-1133">Transmembrane helix</keyword>
<keyword id="KW-0813">Transport</keyword>
<keyword id="KW-0830">Ubiquinone</keyword>
<geneLocation type="mitochondrion"/>
<proteinExistence type="inferred from homology"/>
<evidence type="ECO:0000250" key="1"/>
<evidence type="ECO:0000255" key="2"/>
<evidence type="ECO:0000305" key="3"/>
<dbReference type="EC" id="7.1.1.2"/>
<dbReference type="EMBL" id="U41894">
    <property type="protein sequence ID" value="AAB46648.1"/>
    <property type="molecule type" value="Genomic_DNA"/>
</dbReference>
<dbReference type="SMR" id="P92794"/>
<dbReference type="GO" id="GO:0031966">
    <property type="term" value="C:mitochondrial membrane"/>
    <property type="evidence" value="ECO:0007669"/>
    <property type="project" value="UniProtKB-SubCell"/>
</dbReference>
<dbReference type="GO" id="GO:0008137">
    <property type="term" value="F:NADH dehydrogenase (ubiquinone) activity"/>
    <property type="evidence" value="ECO:0007669"/>
    <property type="project" value="UniProtKB-EC"/>
</dbReference>
<dbReference type="GO" id="GO:0048039">
    <property type="term" value="F:ubiquinone binding"/>
    <property type="evidence" value="ECO:0007669"/>
    <property type="project" value="TreeGrafter"/>
</dbReference>
<dbReference type="GO" id="GO:0042773">
    <property type="term" value="P:ATP synthesis coupled electron transport"/>
    <property type="evidence" value="ECO:0007669"/>
    <property type="project" value="InterPro"/>
</dbReference>
<dbReference type="GO" id="GO:0015990">
    <property type="term" value="P:electron transport coupled proton transport"/>
    <property type="evidence" value="ECO:0007669"/>
    <property type="project" value="TreeGrafter"/>
</dbReference>
<dbReference type="InterPro" id="IPR003918">
    <property type="entry name" value="NADH_UbQ_OxRdtase"/>
</dbReference>
<dbReference type="InterPro" id="IPR001750">
    <property type="entry name" value="ND/Mrp_TM"/>
</dbReference>
<dbReference type="PANTHER" id="PTHR43507">
    <property type="entry name" value="NADH-UBIQUINONE OXIDOREDUCTASE CHAIN 4"/>
    <property type="match status" value="1"/>
</dbReference>
<dbReference type="PANTHER" id="PTHR43507:SF20">
    <property type="entry name" value="NADH-UBIQUINONE OXIDOREDUCTASE CHAIN 4"/>
    <property type="match status" value="1"/>
</dbReference>
<dbReference type="Pfam" id="PF00361">
    <property type="entry name" value="Proton_antipo_M"/>
    <property type="match status" value="1"/>
</dbReference>
<accession>P92794</accession>